<gene>
    <name evidence="5" type="primary">Sftpc</name>
    <name type="synonym">Sftp2</name>
</gene>
<evidence type="ECO:0000250" key="1"/>
<evidence type="ECO:0000250" key="2">
    <source>
        <dbReference type="UniProtKB" id="P11686"/>
    </source>
</evidence>
<evidence type="ECO:0000255" key="3">
    <source>
        <dbReference type="PROSITE-ProRule" id="PRU00255"/>
    </source>
</evidence>
<evidence type="ECO:0000256" key="4">
    <source>
        <dbReference type="SAM" id="MobiDB-lite"/>
    </source>
</evidence>
<evidence type="ECO:0000312" key="5">
    <source>
        <dbReference type="MGI" id="MGI:109517"/>
    </source>
</evidence>
<comment type="function">
    <text>Pulmonary surfactant associated proteins promote alveolar stability by lowering the surface tension at the air-liquid interface in the peripheral air spaces.</text>
</comment>
<comment type="subcellular location">
    <subcellularLocation>
        <location>Secreted</location>
        <location>Extracellular space</location>
        <location>Surface film</location>
    </subcellularLocation>
</comment>
<comment type="miscellaneous">
    <text>Pulmonary surfactant consists of 90% lipid and 10% protein. There are 4 surfactant-associated proteins: 2 collagenous, carbohydrate-binding glycoproteins (SP-A and SP-D) and 2 small hydrophobic proteins (SP-B and SP-C).</text>
</comment>
<organism>
    <name type="scientific">Mus musculus</name>
    <name type="common">Mouse</name>
    <dbReference type="NCBI Taxonomy" id="10090"/>
    <lineage>
        <taxon>Eukaryota</taxon>
        <taxon>Metazoa</taxon>
        <taxon>Chordata</taxon>
        <taxon>Craniata</taxon>
        <taxon>Vertebrata</taxon>
        <taxon>Euteleostomi</taxon>
        <taxon>Mammalia</taxon>
        <taxon>Eutheria</taxon>
        <taxon>Euarchontoglires</taxon>
        <taxon>Glires</taxon>
        <taxon>Rodentia</taxon>
        <taxon>Myomorpha</taxon>
        <taxon>Muroidea</taxon>
        <taxon>Muridae</taxon>
        <taxon>Murinae</taxon>
        <taxon>Mus</taxon>
        <taxon>Mus</taxon>
    </lineage>
</organism>
<keyword id="KW-1015">Disulfide bond</keyword>
<keyword id="KW-0305">Gaseous exchange</keyword>
<keyword id="KW-0449">Lipoprotein</keyword>
<keyword id="KW-0564">Palmitate</keyword>
<keyword id="KW-1185">Reference proteome</keyword>
<keyword id="KW-0964">Secreted</keyword>
<keyword id="KW-0767">Surface film</keyword>
<protein>
    <recommendedName>
        <fullName evidence="2">Surfactant protein C</fullName>
        <shortName>SP-C</shortName>
    </recommendedName>
    <alternativeName>
        <fullName>Pulmonary surfactant-associated protein C</fullName>
    </alternativeName>
    <alternativeName>
        <fullName>Pulmonary surfactant-associated proteolipid SPL(Val)</fullName>
    </alternativeName>
    <alternativeName>
        <fullName>SP5</fullName>
    </alternativeName>
</protein>
<dbReference type="EMBL" id="M38314">
    <property type="protein sequence ID" value="AAA40010.1"/>
    <property type="molecule type" value="Genomic_DNA"/>
</dbReference>
<dbReference type="CCDS" id="CCDS27254.1"/>
<dbReference type="PIR" id="A36534">
    <property type="entry name" value="A36534"/>
</dbReference>
<dbReference type="SMR" id="P21841"/>
<dbReference type="FunCoup" id="P21841">
    <property type="interactions" value="90"/>
</dbReference>
<dbReference type="STRING" id="10090.ENSMUSP00000022692"/>
<dbReference type="iPTMnet" id="P21841"/>
<dbReference type="PhosphoSitePlus" id="P21841"/>
<dbReference type="PaxDb" id="10090-ENSMUSP00000022692"/>
<dbReference type="ProteomicsDB" id="302001"/>
<dbReference type="AGR" id="MGI:109517"/>
<dbReference type="MGI" id="MGI:109517">
    <property type="gene designation" value="Sftpc"/>
</dbReference>
<dbReference type="eggNOG" id="ENOG502S6QH">
    <property type="taxonomic scope" value="Eukaryota"/>
</dbReference>
<dbReference type="InParanoid" id="P21841"/>
<dbReference type="PhylomeDB" id="P21841"/>
<dbReference type="Reactome" id="R-MMU-5683826">
    <property type="pathway name" value="Surfactant metabolism"/>
</dbReference>
<dbReference type="ChiTaRS" id="Sftpc">
    <property type="organism name" value="mouse"/>
</dbReference>
<dbReference type="PRO" id="PR:P21841"/>
<dbReference type="Proteomes" id="UP000000589">
    <property type="component" value="Unplaced"/>
</dbReference>
<dbReference type="RNAct" id="P21841">
    <property type="molecule type" value="protein"/>
</dbReference>
<dbReference type="GO" id="GO:0005737">
    <property type="term" value="C:cytoplasm"/>
    <property type="evidence" value="ECO:0000314"/>
    <property type="project" value="MGI"/>
</dbReference>
<dbReference type="GO" id="GO:0005576">
    <property type="term" value="C:extracellular region"/>
    <property type="evidence" value="ECO:0000314"/>
    <property type="project" value="MGI"/>
</dbReference>
<dbReference type="GO" id="GO:0007585">
    <property type="term" value="P:respiratory gaseous exchange by respiratory system"/>
    <property type="evidence" value="ECO:0007669"/>
    <property type="project" value="UniProtKB-KW"/>
</dbReference>
<dbReference type="Gene3D" id="3.30.390.150">
    <property type="match status" value="1"/>
</dbReference>
<dbReference type="InterPro" id="IPR007084">
    <property type="entry name" value="BRICHOS_dom"/>
</dbReference>
<dbReference type="InterPro" id="IPR001729">
    <property type="entry name" value="SP-C"/>
</dbReference>
<dbReference type="InterPro" id="IPR018051">
    <property type="entry name" value="SP-C_palmitoylation_site"/>
</dbReference>
<dbReference type="InterPro" id="IPR015091">
    <property type="entry name" value="Surfactant_protein_propep"/>
</dbReference>
<dbReference type="PANTHER" id="PTHR10800">
    <property type="entry name" value="PULMONARY SURFACTANT-ASSOCIATED PROTEIN C"/>
    <property type="match status" value="1"/>
</dbReference>
<dbReference type="PANTHER" id="PTHR10800:SF4">
    <property type="entry name" value="PULMONARY SURFACTANT-ASSOCIATED PROTEIN C"/>
    <property type="match status" value="1"/>
</dbReference>
<dbReference type="Pfam" id="PF04089">
    <property type="entry name" value="BRICHOS"/>
    <property type="match status" value="1"/>
</dbReference>
<dbReference type="Pfam" id="PF08999">
    <property type="entry name" value="SP_C-Propep"/>
    <property type="match status" value="1"/>
</dbReference>
<dbReference type="SMART" id="SM01039">
    <property type="entry name" value="BRICHOS"/>
    <property type="match status" value="1"/>
</dbReference>
<dbReference type="SMART" id="SM00019">
    <property type="entry name" value="SF_P"/>
    <property type="match status" value="1"/>
</dbReference>
<dbReference type="PROSITE" id="PS50869">
    <property type="entry name" value="BRICHOS"/>
    <property type="match status" value="1"/>
</dbReference>
<dbReference type="PROSITE" id="PS00341">
    <property type="entry name" value="SURFACT_PALMITOYL"/>
    <property type="match status" value="1"/>
</dbReference>
<accession>P21841</accession>
<feature type="propeptide" id="PRO_0000033483">
    <location>
        <begin position="1"/>
        <end position="23"/>
    </location>
</feature>
<feature type="chain" id="PRO_0000033484" description="Surfactant protein C">
    <location>
        <begin position="24"/>
        <end position="58"/>
    </location>
</feature>
<feature type="propeptide" id="PRO_0000033485">
    <location>
        <begin position="59"/>
        <end position="193"/>
    </location>
</feature>
<feature type="domain" description="BRICHOS" evidence="3">
    <location>
        <begin position="94"/>
        <end position="193"/>
    </location>
</feature>
<feature type="region of interest" description="Disordered" evidence="4">
    <location>
        <begin position="147"/>
        <end position="170"/>
    </location>
</feature>
<feature type="lipid moiety-binding region" description="S-palmitoyl cysteine" evidence="1">
    <location>
        <position position="28"/>
    </location>
</feature>
<feature type="lipid moiety-binding region" description="S-palmitoyl cysteine" evidence="1">
    <location>
        <position position="29"/>
    </location>
</feature>
<feature type="disulfide bond" evidence="1">
    <location>
        <begin position="121"/>
        <end position="185"/>
    </location>
</feature>
<proteinExistence type="evidence at protein level"/>
<sequence>MDMSSKEVLMESPPDYSAGPRSQFRIPCCPVHLKRLLIVVVVVVLVVVVIVGALLMGLHMSQKHTEMVLEMSIGAPETQKRLAPSERADTIATFSIGSTGIVVYDYQRLLTAYKPAPGTYCYIMKMAPESIPSLEAFARKLQNFRAKPSTPTSKLGQEEGHDTGSESDSSGRDLAFLGLAVSTLCGELPLYYI</sequence>
<name>PSPC_MOUSE</name>
<reference key="1">
    <citation type="journal article" date="1990" name="J. Biol. Chem.">
        <title>Structure and expression of the pulmonary surfactant protein SP-C gene in the mouse.</title>
        <authorList>
            <person name="Glasser S.W."/>
            <person name="Korehagen T.R."/>
            <person name="Bruno M.D."/>
            <person name="Dey C."/>
            <person name="Whitsett J.A."/>
        </authorList>
    </citation>
    <scope>NUCLEOTIDE SEQUENCE [GENOMIC DNA]</scope>
</reference>
<reference key="2">
    <citation type="journal article" date="2010" name="Cell">
        <title>A tissue-specific atlas of mouse protein phosphorylation and expression.</title>
        <authorList>
            <person name="Huttlin E.L."/>
            <person name="Jedrychowski M.P."/>
            <person name="Elias J.E."/>
            <person name="Goswami T."/>
            <person name="Rad R."/>
            <person name="Beausoleil S.A."/>
            <person name="Villen J."/>
            <person name="Haas W."/>
            <person name="Sowa M.E."/>
            <person name="Gygi S.P."/>
        </authorList>
    </citation>
    <scope>IDENTIFICATION BY MASS SPECTROMETRY [LARGE SCALE ANALYSIS]</scope>
    <source>
        <tissue>Lung</tissue>
    </source>
</reference>